<accession>Q9CQC8</accession>
<accession>Q3U658</accession>
<accession>Q3UDT7</accession>
<accession>Q8C1Y7</accession>
<organism>
    <name type="scientific">Mus musculus</name>
    <name type="common">Mouse</name>
    <dbReference type="NCBI Taxonomy" id="10090"/>
    <lineage>
        <taxon>Eukaryota</taxon>
        <taxon>Metazoa</taxon>
        <taxon>Chordata</taxon>
        <taxon>Craniata</taxon>
        <taxon>Vertebrata</taxon>
        <taxon>Euteleostomi</taxon>
        <taxon>Mammalia</taxon>
        <taxon>Eutheria</taxon>
        <taxon>Euarchontoglires</taxon>
        <taxon>Glires</taxon>
        <taxon>Rodentia</taxon>
        <taxon>Myomorpha</taxon>
        <taxon>Muroidea</taxon>
        <taxon>Muridae</taxon>
        <taxon>Murinae</taxon>
        <taxon>Mus</taxon>
        <taxon>Mus</taxon>
    </lineage>
</organism>
<protein>
    <recommendedName>
        <fullName>Maspardin</fullName>
    </recommendedName>
    <alternativeName>
        <fullName>Acid cluster protein 33</fullName>
    </alternativeName>
    <alternativeName>
        <fullName>Spastic paraplegia 21 autosomal recessive Mast syndrome protein homolog</fullName>
    </alternativeName>
</protein>
<comment type="function">
    <text evidence="1">May play a role as a negative regulatory factor in CD4-dependent T-cell activation.</text>
</comment>
<comment type="subunit">
    <text evidence="1">Interacts with CD4. Interacts with ALDH16A1.</text>
</comment>
<comment type="subcellular location">
    <subcellularLocation>
        <location evidence="1">Cytoplasm</location>
    </subcellularLocation>
</comment>
<comment type="alternative products">
    <event type="alternative splicing"/>
    <isoform>
        <id>Q9CQC8-1</id>
        <name>1</name>
        <sequence type="displayed"/>
    </isoform>
    <isoform>
        <id>Q9CQC8-2</id>
        <name>2</name>
        <sequence type="described" ref="VSP_017634"/>
    </isoform>
</comment>
<comment type="tissue specificity">
    <text evidence="4">Expressed in cell lines FT.1 and in a L cell fibroblast derivative (at protein level).</text>
</comment>
<comment type="similarity">
    <text evidence="6">Belongs to the AB hydrolase superfamily.</text>
</comment>
<sequence length="308" mass="34952">MGEIKVSPDYNWFRSTVPLKKIIVDDDDSKIWSLYDAGPRSIRCPLIFLPPVSGTADVFFQQILALTGWGYRVIALQYPVYWDHLEFCDGFRKLLDHLQLDKVHLFGASLGGFLAQKFAEYTHKSPRVHSLILCNAFSDTSIFNQTWTANSFWLMPAFMLKKIVLGNFSSGPVDPMMADAIDFMVDRLESLGQSELASRLTLNCQNSYVEPHKIRDIPVTIMDVFDQSALSTEAKEEMYKLYPNARRAHLKTGGNFPYLCRSAEVNLYVQIHLLQFHGTKYAAIDPSVVSAEELEVQKGRLGLSQEEP</sequence>
<dbReference type="EMBL" id="AK009332">
    <property type="protein sequence ID" value="BAB26224.1"/>
    <property type="molecule type" value="mRNA"/>
</dbReference>
<dbReference type="EMBL" id="AK011985">
    <property type="protein sequence ID" value="BAB27958.1"/>
    <property type="molecule type" value="mRNA"/>
</dbReference>
<dbReference type="EMBL" id="AK090017">
    <property type="protein sequence ID" value="BAC41047.1"/>
    <property type="molecule type" value="mRNA"/>
</dbReference>
<dbReference type="EMBL" id="AK149930">
    <property type="protein sequence ID" value="BAE29174.1"/>
    <property type="molecule type" value="mRNA"/>
</dbReference>
<dbReference type="EMBL" id="AK150215">
    <property type="protein sequence ID" value="BAE29385.1"/>
    <property type="molecule type" value="mRNA"/>
</dbReference>
<dbReference type="EMBL" id="AK150581">
    <property type="protein sequence ID" value="BAE29675.1"/>
    <property type="molecule type" value="mRNA"/>
</dbReference>
<dbReference type="EMBL" id="AK153284">
    <property type="protein sequence ID" value="BAE31867.1"/>
    <property type="molecule type" value="mRNA"/>
</dbReference>
<dbReference type="EMBL" id="AK170666">
    <property type="protein sequence ID" value="BAE41947.1"/>
    <property type="molecule type" value="mRNA"/>
</dbReference>
<dbReference type="EMBL" id="BC099434">
    <property type="protein sequence ID" value="AAH99434.1"/>
    <property type="molecule type" value="mRNA"/>
</dbReference>
<dbReference type="CCDS" id="CCDS23293.1">
    <molecule id="Q9CQC8-1"/>
</dbReference>
<dbReference type="RefSeq" id="NP_001344742.1">
    <molecule id="Q9CQC8-1"/>
    <property type="nucleotide sequence ID" value="NM_001357813.2"/>
</dbReference>
<dbReference type="RefSeq" id="NP_613050.1">
    <molecule id="Q9CQC8-1"/>
    <property type="nucleotide sequence ID" value="NM_138584.3"/>
</dbReference>
<dbReference type="RefSeq" id="XP_006511285.1">
    <property type="nucleotide sequence ID" value="XM_006511222.3"/>
</dbReference>
<dbReference type="RefSeq" id="XP_030100269.1">
    <molecule id="Q9CQC8-1"/>
    <property type="nucleotide sequence ID" value="XM_030244409.1"/>
</dbReference>
<dbReference type="SMR" id="Q9CQC8"/>
<dbReference type="BioGRID" id="205693">
    <property type="interactions" value="6"/>
</dbReference>
<dbReference type="FunCoup" id="Q9CQC8">
    <property type="interactions" value="3395"/>
</dbReference>
<dbReference type="STRING" id="10090.ENSMUSP00000034955"/>
<dbReference type="ESTHER" id="mouse-SPG21">
    <property type="family name" value="Maspardin-ACP33-SPG21_like"/>
</dbReference>
<dbReference type="iPTMnet" id="Q9CQC8"/>
<dbReference type="PhosphoSitePlus" id="Q9CQC8"/>
<dbReference type="jPOST" id="Q9CQC8"/>
<dbReference type="PaxDb" id="10090-ENSMUSP00000034955"/>
<dbReference type="PeptideAtlas" id="Q9CQC8"/>
<dbReference type="ProteomicsDB" id="257317">
    <molecule id="Q9CQC8-1"/>
</dbReference>
<dbReference type="ProteomicsDB" id="257318">
    <molecule id="Q9CQC8-2"/>
</dbReference>
<dbReference type="Pumba" id="Q9CQC8"/>
<dbReference type="Antibodypedia" id="25890">
    <property type="antibodies" value="106 antibodies from 19 providers"/>
</dbReference>
<dbReference type="Ensembl" id="ENSMUST00000034955.8">
    <molecule id="Q9CQC8-1"/>
    <property type="protein sequence ID" value="ENSMUSP00000034955.7"/>
    <property type="gene ID" value="ENSMUSG00000032388.8"/>
</dbReference>
<dbReference type="GeneID" id="27965"/>
<dbReference type="KEGG" id="mmu:27965"/>
<dbReference type="UCSC" id="uc009qdi.1">
    <molecule id="Q9CQC8-1"/>
    <property type="organism name" value="mouse"/>
</dbReference>
<dbReference type="AGR" id="MGI:106403"/>
<dbReference type="CTD" id="51324"/>
<dbReference type="MGI" id="MGI:106403">
    <property type="gene designation" value="Spg21"/>
</dbReference>
<dbReference type="VEuPathDB" id="HostDB:ENSMUSG00000032388"/>
<dbReference type="eggNOG" id="ENOG502QPSD">
    <property type="taxonomic scope" value="Eukaryota"/>
</dbReference>
<dbReference type="GeneTree" id="ENSGT00390000007857"/>
<dbReference type="HOGENOM" id="CLU_052260_0_0_1"/>
<dbReference type="InParanoid" id="Q9CQC8"/>
<dbReference type="OMA" id="CYVQPQK"/>
<dbReference type="OrthoDB" id="10264550at2759"/>
<dbReference type="PhylomeDB" id="Q9CQC8"/>
<dbReference type="TreeFam" id="TF105253"/>
<dbReference type="BioGRID-ORCS" id="27965">
    <property type="hits" value="2 hits in 78 CRISPR screens"/>
</dbReference>
<dbReference type="ChiTaRS" id="Spg21">
    <property type="organism name" value="mouse"/>
</dbReference>
<dbReference type="PRO" id="PR:Q9CQC8"/>
<dbReference type="Proteomes" id="UP000000589">
    <property type="component" value="Chromosome 9"/>
</dbReference>
<dbReference type="RNAct" id="Q9CQC8">
    <property type="molecule type" value="protein"/>
</dbReference>
<dbReference type="Bgee" id="ENSMUSG00000032388">
    <property type="expression patterns" value="Expressed in gonadal fat pad and 256 other cell types or tissues"/>
</dbReference>
<dbReference type="ExpressionAtlas" id="Q9CQC8">
    <property type="expression patterns" value="baseline and differential"/>
</dbReference>
<dbReference type="GO" id="GO:0005829">
    <property type="term" value="C:cytosol"/>
    <property type="evidence" value="ECO:0000250"/>
    <property type="project" value="UniProtKB"/>
</dbReference>
<dbReference type="GO" id="GO:0030140">
    <property type="term" value="C:trans-Golgi network transport vesicle"/>
    <property type="evidence" value="ECO:0000250"/>
    <property type="project" value="UniProtKB"/>
</dbReference>
<dbReference type="GO" id="GO:0042609">
    <property type="term" value="F:CD4 receptor binding"/>
    <property type="evidence" value="ECO:0000250"/>
    <property type="project" value="UniProtKB"/>
</dbReference>
<dbReference type="GO" id="GO:0048668">
    <property type="term" value="P:collateral sprouting"/>
    <property type="evidence" value="ECO:0000315"/>
    <property type="project" value="MGI"/>
</dbReference>
<dbReference type="GO" id="GO:0007173">
    <property type="term" value="P:epidermal growth factor receptor signaling pathway"/>
    <property type="evidence" value="ECO:0000315"/>
    <property type="project" value="MGI"/>
</dbReference>
<dbReference type="GO" id="GO:0010467">
    <property type="term" value="P:gene expression"/>
    <property type="evidence" value="ECO:0000315"/>
    <property type="project" value="MGI"/>
</dbReference>
<dbReference type="GO" id="GO:0060173">
    <property type="term" value="P:limb development"/>
    <property type="evidence" value="ECO:0000315"/>
    <property type="project" value="MGI"/>
</dbReference>
<dbReference type="GO" id="GO:0007626">
    <property type="term" value="P:locomotory behavior"/>
    <property type="evidence" value="ECO:0000315"/>
    <property type="project" value="MGI"/>
</dbReference>
<dbReference type="GO" id="GO:0050905">
    <property type="term" value="P:neuromuscular process"/>
    <property type="evidence" value="ECO:0000315"/>
    <property type="project" value="MGI"/>
</dbReference>
<dbReference type="GO" id="GO:0042551">
    <property type="term" value="P:neuron maturation"/>
    <property type="evidence" value="ECO:0000315"/>
    <property type="project" value="MGI"/>
</dbReference>
<dbReference type="GO" id="GO:0070849">
    <property type="term" value="P:response to epidermal growth factor"/>
    <property type="evidence" value="ECO:0000315"/>
    <property type="project" value="MGI"/>
</dbReference>
<dbReference type="FunFam" id="3.40.50.1820:FF:000040">
    <property type="entry name" value="SPG21, maspardin"/>
    <property type="match status" value="1"/>
</dbReference>
<dbReference type="Gene3D" id="3.40.50.1820">
    <property type="entry name" value="alpha/beta hydrolase"/>
    <property type="match status" value="1"/>
</dbReference>
<dbReference type="InterPro" id="IPR000073">
    <property type="entry name" value="AB_hydrolase_1"/>
</dbReference>
<dbReference type="InterPro" id="IPR029058">
    <property type="entry name" value="AB_hydrolase_fold"/>
</dbReference>
<dbReference type="InterPro" id="IPR026151">
    <property type="entry name" value="Maspardin"/>
</dbReference>
<dbReference type="PANTHER" id="PTHR15913">
    <property type="entry name" value="ACID CLUSTER PROTEIN 33"/>
    <property type="match status" value="1"/>
</dbReference>
<dbReference type="PANTHER" id="PTHR15913:SF0">
    <property type="entry name" value="MASPARDIN"/>
    <property type="match status" value="1"/>
</dbReference>
<dbReference type="Pfam" id="PF00561">
    <property type="entry name" value="Abhydrolase_1"/>
    <property type="match status" value="1"/>
</dbReference>
<dbReference type="SUPFAM" id="SSF53474">
    <property type="entry name" value="alpha/beta-Hydrolases"/>
    <property type="match status" value="1"/>
</dbReference>
<feature type="chain" id="PRO_0000227982" description="Maspardin">
    <location>
        <begin position="1"/>
        <end position="308"/>
    </location>
</feature>
<feature type="domain" description="AB hydrolase-1" evidence="3">
    <location>
        <begin position="87"/>
        <end position="159"/>
    </location>
</feature>
<feature type="modified residue" description="Phosphoserine" evidence="2">
    <location>
        <position position="304"/>
    </location>
</feature>
<feature type="splice variant" id="VSP_017634" description="In isoform 2." evidence="5">
    <original>IHLLQFHGTKYAAIDPSVVSAEELEVQKGRLGLSQEEP</original>
    <variation>VSPAWTPEHVRFRDPPQDSAP</variation>
    <location>
        <begin position="271"/>
        <end position="308"/>
    </location>
</feature>
<feature type="sequence conflict" description="In Ref. 1; BAE29174." evidence="6" ref="1">
    <original>G</original>
    <variation>V</variation>
    <location>
        <position position="278"/>
    </location>
</feature>
<feature type="sequence conflict" description="In Ref. 1; BAE31867." evidence="6" ref="1">
    <original>E</original>
    <variation>G</variation>
    <location>
        <position position="292"/>
    </location>
</feature>
<keyword id="KW-0025">Alternative splicing</keyword>
<keyword id="KW-0963">Cytoplasm</keyword>
<keyword id="KW-0597">Phosphoprotein</keyword>
<keyword id="KW-1185">Reference proteome</keyword>
<reference key="1">
    <citation type="journal article" date="2005" name="Science">
        <title>The transcriptional landscape of the mammalian genome.</title>
        <authorList>
            <person name="Carninci P."/>
            <person name="Kasukawa T."/>
            <person name="Katayama S."/>
            <person name="Gough J."/>
            <person name="Frith M.C."/>
            <person name="Maeda N."/>
            <person name="Oyama R."/>
            <person name="Ravasi T."/>
            <person name="Lenhard B."/>
            <person name="Wells C."/>
            <person name="Kodzius R."/>
            <person name="Shimokawa K."/>
            <person name="Bajic V.B."/>
            <person name="Brenner S.E."/>
            <person name="Batalov S."/>
            <person name="Forrest A.R."/>
            <person name="Zavolan M."/>
            <person name="Davis M.J."/>
            <person name="Wilming L.G."/>
            <person name="Aidinis V."/>
            <person name="Allen J.E."/>
            <person name="Ambesi-Impiombato A."/>
            <person name="Apweiler R."/>
            <person name="Aturaliya R.N."/>
            <person name="Bailey T.L."/>
            <person name="Bansal M."/>
            <person name="Baxter L."/>
            <person name="Beisel K.W."/>
            <person name="Bersano T."/>
            <person name="Bono H."/>
            <person name="Chalk A.M."/>
            <person name="Chiu K.P."/>
            <person name="Choudhary V."/>
            <person name="Christoffels A."/>
            <person name="Clutterbuck D.R."/>
            <person name="Crowe M.L."/>
            <person name="Dalla E."/>
            <person name="Dalrymple B.P."/>
            <person name="de Bono B."/>
            <person name="Della Gatta G."/>
            <person name="di Bernardo D."/>
            <person name="Down T."/>
            <person name="Engstrom P."/>
            <person name="Fagiolini M."/>
            <person name="Faulkner G."/>
            <person name="Fletcher C.F."/>
            <person name="Fukushima T."/>
            <person name="Furuno M."/>
            <person name="Futaki S."/>
            <person name="Gariboldi M."/>
            <person name="Georgii-Hemming P."/>
            <person name="Gingeras T.R."/>
            <person name="Gojobori T."/>
            <person name="Green R.E."/>
            <person name="Gustincich S."/>
            <person name="Harbers M."/>
            <person name="Hayashi Y."/>
            <person name="Hensch T.K."/>
            <person name="Hirokawa N."/>
            <person name="Hill D."/>
            <person name="Huminiecki L."/>
            <person name="Iacono M."/>
            <person name="Ikeo K."/>
            <person name="Iwama A."/>
            <person name="Ishikawa T."/>
            <person name="Jakt M."/>
            <person name="Kanapin A."/>
            <person name="Katoh M."/>
            <person name="Kawasawa Y."/>
            <person name="Kelso J."/>
            <person name="Kitamura H."/>
            <person name="Kitano H."/>
            <person name="Kollias G."/>
            <person name="Krishnan S.P."/>
            <person name="Kruger A."/>
            <person name="Kummerfeld S.K."/>
            <person name="Kurochkin I.V."/>
            <person name="Lareau L.F."/>
            <person name="Lazarevic D."/>
            <person name="Lipovich L."/>
            <person name="Liu J."/>
            <person name="Liuni S."/>
            <person name="McWilliam S."/>
            <person name="Madan Babu M."/>
            <person name="Madera M."/>
            <person name="Marchionni L."/>
            <person name="Matsuda H."/>
            <person name="Matsuzawa S."/>
            <person name="Miki H."/>
            <person name="Mignone F."/>
            <person name="Miyake S."/>
            <person name="Morris K."/>
            <person name="Mottagui-Tabar S."/>
            <person name="Mulder N."/>
            <person name="Nakano N."/>
            <person name="Nakauchi H."/>
            <person name="Ng P."/>
            <person name="Nilsson R."/>
            <person name="Nishiguchi S."/>
            <person name="Nishikawa S."/>
            <person name="Nori F."/>
            <person name="Ohara O."/>
            <person name="Okazaki Y."/>
            <person name="Orlando V."/>
            <person name="Pang K.C."/>
            <person name="Pavan W.J."/>
            <person name="Pavesi G."/>
            <person name="Pesole G."/>
            <person name="Petrovsky N."/>
            <person name="Piazza S."/>
            <person name="Reed J."/>
            <person name="Reid J.F."/>
            <person name="Ring B.Z."/>
            <person name="Ringwald M."/>
            <person name="Rost B."/>
            <person name="Ruan Y."/>
            <person name="Salzberg S.L."/>
            <person name="Sandelin A."/>
            <person name="Schneider C."/>
            <person name="Schoenbach C."/>
            <person name="Sekiguchi K."/>
            <person name="Semple C.A."/>
            <person name="Seno S."/>
            <person name="Sessa L."/>
            <person name="Sheng Y."/>
            <person name="Shibata Y."/>
            <person name="Shimada H."/>
            <person name="Shimada K."/>
            <person name="Silva D."/>
            <person name="Sinclair B."/>
            <person name="Sperling S."/>
            <person name="Stupka E."/>
            <person name="Sugiura K."/>
            <person name="Sultana R."/>
            <person name="Takenaka Y."/>
            <person name="Taki K."/>
            <person name="Tammoja K."/>
            <person name="Tan S.L."/>
            <person name="Tang S."/>
            <person name="Taylor M.S."/>
            <person name="Tegner J."/>
            <person name="Teichmann S.A."/>
            <person name="Ueda H.R."/>
            <person name="van Nimwegen E."/>
            <person name="Verardo R."/>
            <person name="Wei C.L."/>
            <person name="Yagi K."/>
            <person name="Yamanishi H."/>
            <person name="Zabarovsky E."/>
            <person name="Zhu S."/>
            <person name="Zimmer A."/>
            <person name="Hide W."/>
            <person name="Bult C."/>
            <person name="Grimmond S.M."/>
            <person name="Teasdale R.D."/>
            <person name="Liu E.T."/>
            <person name="Brusic V."/>
            <person name="Quackenbush J."/>
            <person name="Wahlestedt C."/>
            <person name="Mattick J.S."/>
            <person name="Hume D.A."/>
            <person name="Kai C."/>
            <person name="Sasaki D."/>
            <person name="Tomaru Y."/>
            <person name="Fukuda S."/>
            <person name="Kanamori-Katayama M."/>
            <person name="Suzuki M."/>
            <person name="Aoki J."/>
            <person name="Arakawa T."/>
            <person name="Iida J."/>
            <person name="Imamura K."/>
            <person name="Itoh M."/>
            <person name="Kato T."/>
            <person name="Kawaji H."/>
            <person name="Kawagashira N."/>
            <person name="Kawashima T."/>
            <person name="Kojima M."/>
            <person name="Kondo S."/>
            <person name="Konno H."/>
            <person name="Nakano K."/>
            <person name="Ninomiya N."/>
            <person name="Nishio T."/>
            <person name="Okada M."/>
            <person name="Plessy C."/>
            <person name="Shibata K."/>
            <person name="Shiraki T."/>
            <person name="Suzuki S."/>
            <person name="Tagami M."/>
            <person name="Waki K."/>
            <person name="Watahiki A."/>
            <person name="Okamura-Oho Y."/>
            <person name="Suzuki H."/>
            <person name="Kawai J."/>
            <person name="Hayashizaki Y."/>
        </authorList>
    </citation>
    <scope>NUCLEOTIDE SEQUENCE [LARGE SCALE MRNA] (ISOFORMS 1 AND 2)</scope>
    <source>
        <strain>C57BL/6J</strain>
        <strain>NOD</strain>
        <tissue>Bone marrow</tissue>
        <tissue>Dendritic cell</tissue>
        <tissue>Embryo</tissue>
        <tissue>Tongue</tissue>
    </source>
</reference>
<reference key="2">
    <citation type="journal article" date="2004" name="Genome Res.">
        <title>The status, quality, and expansion of the NIH full-length cDNA project: the Mammalian Gene Collection (MGC).</title>
        <authorList>
            <consortium name="The MGC Project Team"/>
        </authorList>
    </citation>
    <scope>NUCLEOTIDE SEQUENCE [LARGE SCALE MRNA] (ISOFORM 1)</scope>
    <source>
        <tissue>Placenta</tissue>
    </source>
</reference>
<reference key="3">
    <citation type="journal article" date="2001" name="J. Biol. Chem.">
        <title>Cloning of ACP33 as a novel intracellular ligand of CD4.</title>
        <authorList>
            <person name="Zeitlmann L."/>
            <person name="Sirim P."/>
            <person name="Kremmer E."/>
            <person name="Kolanus W."/>
        </authorList>
    </citation>
    <scope>TISSUE SPECIFICITY</scope>
</reference>
<reference key="4">
    <citation type="journal article" date="2010" name="Cell">
        <title>A tissue-specific atlas of mouse protein phosphorylation and expression.</title>
        <authorList>
            <person name="Huttlin E.L."/>
            <person name="Jedrychowski M.P."/>
            <person name="Elias J.E."/>
            <person name="Goswami T."/>
            <person name="Rad R."/>
            <person name="Beausoleil S.A."/>
            <person name="Villen J."/>
            <person name="Haas W."/>
            <person name="Sowa M.E."/>
            <person name="Gygi S.P."/>
        </authorList>
    </citation>
    <scope>IDENTIFICATION BY MASS SPECTROMETRY [LARGE SCALE ANALYSIS]</scope>
    <source>
        <tissue>Brain</tissue>
        <tissue>Kidney</tissue>
        <tissue>Lung</tissue>
        <tissue>Spleen</tissue>
    </source>
</reference>
<gene>
    <name type="primary">Spg21</name>
</gene>
<evidence type="ECO:0000250" key="1"/>
<evidence type="ECO:0000250" key="2">
    <source>
        <dbReference type="UniProtKB" id="Q9NZD8"/>
    </source>
</evidence>
<evidence type="ECO:0000255" key="3"/>
<evidence type="ECO:0000269" key="4">
    <source>
    </source>
</evidence>
<evidence type="ECO:0000303" key="5">
    <source>
    </source>
</evidence>
<evidence type="ECO:0000305" key="6"/>
<name>SPG21_MOUSE</name>
<proteinExistence type="evidence at protein level"/>